<accession>Q9UY47</accession>
<accession>G8ZK22</accession>
<reference key="1">
    <citation type="journal article" date="2003" name="Mol. Microbiol.">
        <title>An integrated analysis of the genome of the hyperthermophilic archaeon Pyrococcus abyssi.</title>
        <authorList>
            <person name="Cohen G.N."/>
            <person name="Barbe V."/>
            <person name="Flament D."/>
            <person name="Galperin M."/>
            <person name="Heilig R."/>
            <person name="Lecompte O."/>
            <person name="Poch O."/>
            <person name="Prieur D."/>
            <person name="Querellou J."/>
            <person name="Ripp R."/>
            <person name="Thierry J.-C."/>
            <person name="Van der Oost J."/>
            <person name="Weissenbach J."/>
            <person name="Zivanovic Y."/>
            <person name="Forterre P."/>
        </authorList>
    </citation>
    <scope>NUCLEOTIDE SEQUENCE [LARGE SCALE GENOMIC DNA]</scope>
    <source>
        <strain>GE5 / Orsay</strain>
    </source>
</reference>
<reference key="2">
    <citation type="journal article" date="2012" name="Curr. Microbiol.">
        <title>Re-annotation of two hyperthermophilic archaea Pyrococcus abyssi GE5 and Pyrococcus furiosus DSM 3638.</title>
        <authorList>
            <person name="Gao J."/>
            <person name="Wang J."/>
        </authorList>
    </citation>
    <scope>GENOME REANNOTATION</scope>
    <source>
        <strain>GE5 / Orsay</strain>
    </source>
</reference>
<proteinExistence type="inferred from homology"/>
<comment type="catalytic activity">
    <reaction>
        <text>an acyl phosphate + H2O = a carboxylate + phosphate + H(+)</text>
        <dbReference type="Rhea" id="RHEA:14965"/>
        <dbReference type="ChEBI" id="CHEBI:15377"/>
        <dbReference type="ChEBI" id="CHEBI:15378"/>
        <dbReference type="ChEBI" id="CHEBI:29067"/>
        <dbReference type="ChEBI" id="CHEBI:43474"/>
        <dbReference type="ChEBI" id="CHEBI:59918"/>
        <dbReference type="EC" id="3.6.1.7"/>
    </reaction>
</comment>
<comment type="similarity">
    <text evidence="2">Belongs to the acylphosphatase family.</text>
</comment>
<gene>
    <name type="primary">acyP</name>
    <name type="ordered locus">PYRAB16610</name>
    <name type="ORF">PAB7421</name>
</gene>
<keyword id="KW-0378">Hydrolase</keyword>
<protein>
    <recommendedName>
        <fullName>Acylphosphatase</fullName>
        <ecNumber>3.6.1.7</ecNumber>
    </recommendedName>
    <alternativeName>
        <fullName>Acylphosphate phosphohydrolase</fullName>
    </alternativeName>
</protein>
<name>ACYP_PYRAB</name>
<evidence type="ECO:0000255" key="1">
    <source>
        <dbReference type="PROSITE-ProRule" id="PRU00520"/>
    </source>
</evidence>
<evidence type="ECO:0000305" key="2"/>
<sequence>MGIVRAHLRIYGRVQGVGFRWSMQREARKLGVNGWVRNLPDGSVEAVLEGEEERVEALIGWAHQGPPFARVTRVEVKWEEPKGEKGFRIVG</sequence>
<organism>
    <name type="scientific">Pyrococcus abyssi (strain GE5 / Orsay)</name>
    <dbReference type="NCBI Taxonomy" id="272844"/>
    <lineage>
        <taxon>Archaea</taxon>
        <taxon>Methanobacteriati</taxon>
        <taxon>Methanobacteriota</taxon>
        <taxon>Thermococci</taxon>
        <taxon>Thermococcales</taxon>
        <taxon>Thermococcaceae</taxon>
        <taxon>Pyrococcus</taxon>
    </lineage>
</organism>
<feature type="chain" id="PRO_0000158558" description="Acylphosphatase">
    <location>
        <begin position="1"/>
        <end position="91"/>
    </location>
</feature>
<feature type="domain" description="Acylphosphatase-like" evidence="1">
    <location>
        <begin position="5"/>
        <end position="91"/>
    </location>
</feature>
<feature type="active site" evidence="1">
    <location>
        <position position="20"/>
    </location>
</feature>
<feature type="active site" evidence="1">
    <location>
        <position position="38"/>
    </location>
</feature>
<dbReference type="EC" id="3.6.1.7"/>
<dbReference type="EMBL" id="AJ248288">
    <property type="protein sequence ID" value="CAB50565.1"/>
    <property type="molecule type" value="Genomic_DNA"/>
</dbReference>
<dbReference type="EMBL" id="HE613800">
    <property type="protein sequence ID" value="CCE71129.1"/>
    <property type="molecule type" value="Genomic_DNA"/>
</dbReference>
<dbReference type="PIR" id="G75015">
    <property type="entry name" value="G75015"/>
</dbReference>
<dbReference type="RefSeq" id="WP_010868779.1">
    <property type="nucleotide sequence ID" value="NC_000868.1"/>
</dbReference>
<dbReference type="SMR" id="Q9UY47"/>
<dbReference type="STRING" id="272844.PAB7421"/>
<dbReference type="KEGG" id="pab:PAB7421"/>
<dbReference type="PATRIC" id="fig|272844.11.peg.1775"/>
<dbReference type="eggNOG" id="arCOG01674">
    <property type="taxonomic scope" value="Archaea"/>
</dbReference>
<dbReference type="HOGENOM" id="CLU_141932_3_2_2"/>
<dbReference type="OrthoDB" id="6643at2157"/>
<dbReference type="PhylomeDB" id="Q9UY47"/>
<dbReference type="Proteomes" id="UP000000810">
    <property type="component" value="Chromosome"/>
</dbReference>
<dbReference type="Proteomes" id="UP000009139">
    <property type="component" value="Chromosome"/>
</dbReference>
<dbReference type="GO" id="GO:0003998">
    <property type="term" value="F:acylphosphatase activity"/>
    <property type="evidence" value="ECO:0007669"/>
    <property type="project" value="UniProtKB-EC"/>
</dbReference>
<dbReference type="FunFam" id="3.30.70.100:FF:000012">
    <property type="entry name" value="Acylphosphatase"/>
    <property type="match status" value="1"/>
</dbReference>
<dbReference type="Gene3D" id="3.30.70.100">
    <property type="match status" value="1"/>
</dbReference>
<dbReference type="InterPro" id="IPR020456">
    <property type="entry name" value="Acylphosphatase"/>
</dbReference>
<dbReference type="InterPro" id="IPR001792">
    <property type="entry name" value="Acylphosphatase-like_dom"/>
</dbReference>
<dbReference type="InterPro" id="IPR036046">
    <property type="entry name" value="Acylphosphatase-like_dom_sf"/>
</dbReference>
<dbReference type="InterPro" id="IPR017968">
    <property type="entry name" value="Acylphosphatase_CS"/>
</dbReference>
<dbReference type="NCBIfam" id="NF011010">
    <property type="entry name" value="PRK14436.1"/>
    <property type="match status" value="1"/>
</dbReference>
<dbReference type="NCBIfam" id="NF011016">
    <property type="entry name" value="PRK14444.1"/>
    <property type="match status" value="1"/>
</dbReference>
<dbReference type="PANTHER" id="PTHR47268">
    <property type="entry name" value="ACYLPHOSPHATASE"/>
    <property type="match status" value="1"/>
</dbReference>
<dbReference type="PANTHER" id="PTHR47268:SF4">
    <property type="entry name" value="ACYLPHOSPHATASE"/>
    <property type="match status" value="1"/>
</dbReference>
<dbReference type="Pfam" id="PF00708">
    <property type="entry name" value="Acylphosphatase"/>
    <property type="match status" value="1"/>
</dbReference>
<dbReference type="PRINTS" id="PR00112">
    <property type="entry name" value="ACYLPHPHTASE"/>
</dbReference>
<dbReference type="SUPFAM" id="SSF54975">
    <property type="entry name" value="Acylphosphatase/BLUF domain-like"/>
    <property type="match status" value="1"/>
</dbReference>
<dbReference type="PROSITE" id="PS00150">
    <property type="entry name" value="ACYLPHOSPHATASE_1"/>
    <property type="match status" value="1"/>
</dbReference>
<dbReference type="PROSITE" id="PS00151">
    <property type="entry name" value="ACYLPHOSPHATASE_2"/>
    <property type="match status" value="1"/>
</dbReference>
<dbReference type="PROSITE" id="PS51160">
    <property type="entry name" value="ACYLPHOSPHATASE_3"/>
    <property type="match status" value="1"/>
</dbReference>